<keyword id="KW-0150">Chloroplast</keyword>
<keyword id="KW-0903">Direct protein sequencing</keyword>
<keyword id="KW-0472">Membrane</keyword>
<keyword id="KW-0602">Photosynthesis</keyword>
<keyword id="KW-0603">Photosystem I</keyword>
<keyword id="KW-0934">Plastid</keyword>
<keyword id="KW-0793">Thylakoid</keyword>
<name>PSAE_CUCSA</name>
<organism>
    <name type="scientific">Cucumis sativus</name>
    <name type="common">Cucumber</name>
    <dbReference type="NCBI Taxonomy" id="3659"/>
    <lineage>
        <taxon>Eukaryota</taxon>
        <taxon>Viridiplantae</taxon>
        <taxon>Streptophyta</taxon>
        <taxon>Embryophyta</taxon>
        <taxon>Tracheophyta</taxon>
        <taxon>Spermatophyta</taxon>
        <taxon>Magnoliopsida</taxon>
        <taxon>eudicotyledons</taxon>
        <taxon>Gunneridae</taxon>
        <taxon>Pentapetalae</taxon>
        <taxon>rosids</taxon>
        <taxon>fabids</taxon>
        <taxon>Cucurbitales</taxon>
        <taxon>Cucurbitaceae</taxon>
        <taxon>Benincaseae</taxon>
        <taxon>Cucumis</taxon>
    </lineage>
</organism>
<evidence type="ECO:0000250" key="1"/>
<evidence type="ECO:0000305" key="2"/>
<gene>
    <name type="primary">PSAE</name>
</gene>
<dbReference type="PIR" id="G56819">
    <property type="entry name" value="G56819"/>
</dbReference>
<dbReference type="GO" id="GO:0009535">
    <property type="term" value="C:chloroplast thylakoid membrane"/>
    <property type="evidence" value="ECO:0007669"/>
    <property type="project" value="UniProtKB-SubCell"/>
</dbReference>
<dbReference type="GO" id="GO:0009522">
    <property type="term" value="C:photosystem I"/>
    <property type="evidence" value="ECO:0007669"/>
    <property type="project" value="UniProtKB-KW"/>
</dbReference>
<dbReference type="GO" id="GO:0015979">
    <property type="term" value="P:photosynthesis"/>
    <property type="evidence" value="ECO:0007669"/>
    <property type="project" value="UniProtKB-KW"/>
</dbReference>
<protein>
    <recommendedName>
        <fullName>Photosystem I reaction center subunit IV</fullName>
        <shortName>PSI-E</shortName>
    </recommendedName>
    <alternativeName>
        <fullName>PS I subunit 6</fullName>
    </alternativeName>
    <alternativeName>
        <fullName>Photosystem I 19.5 kDa protein</fullName>
    </alternativeName>
</protein>
<sequence>XDEAAPPPAATAPXAAXTE</sequence>
<accession>P42047</accession>
<comment type="function">
    <text evidence="1">Stabilizes the interaction between PsaC and the PSI core, assists the docking of the ferredoxin to PSI and interacts with ferredoxin-NADP oxidoreductase.</text>
</comment>
<comment type="subcellular location">
    <subcellularLocation>
        <location evidence="1">Plastid</location>
        <location evidence="1">Chloroplast thylakoid membrane</location>
        <topology evidence="1">Peripheral membrane protein</topology>
    </subcellularLocation>
</comment>
<comment type="similarity">
    <text evidence="2">Belongs to the PsaE family.</text>
</comment>
<feature type="chain" id="PRO_0000204391" description="Photosystem I reaction center subunit IV">
    <location>
        <begin position="1"/>
        <end position="19" status="greater than"/>
    </location>
</feature>
<feature type="non-terminal residue">
    <location>
        <position position="19"/>
    </location>
</feature>
<reference key="1">
    <citation type="journal article" date="1991" name="Biochim. Biophys. Acta">
        <title>Characterization of genes that encode subunits of cucumber PS I complex by N-terminal sequencing.</title>
        <authorList>
            <person name="Iwasaki Y."/>
            <person name="Ishikawa H."/>
            <person name="Hibino T."/>
            <person name="Takabe T."/>
        </authorList>
    </citation>
    <scope>PROTEIN SEQUENCE</scope>
    <source>
        <tissue>Cotyledon</tissue>
    </source>
</reference>
<proteinExistence type="evidence at protein level"/>